<comment type="function">
    <text evidence="2">Cell wall formation.</text>
</comment>
<comment type="catalytic activity">
    <reaction evidence="2">
        <text>2 D-alanine + ATP = D-alanyl-D-alanine + ADP + phosphate + H(+)</text>
        <dbReference type="Rhea" id="RHEA:11224"/>
        <dbReference type="ChEBI" id="CHEBI:15378"/>
        <dbReference type="ChEBI" id="CHEBI:30616"/>
        <dbReference type="ChEBI" id="CHEBI:43474"/>
        <dbReference type="ChEBI" id="CHEBI:57416"/>
        <dbReference type="ChEBI" id="CHEBI:57822"/>
        <dbReference type="ChEBI" id="CHEBI:456216"/>
        <dbReference type="EC" id="6.3.2.4"/>
    </reaction>
</comment>
<comment type="cofactor">
    <cofactor evidence="1">
        <name>Mg(2+)</name>
        <dbReference type="ChEBI" id="CHEBI:18420"/>
    </cofactor>
    <cofactor evidence="1">
        <name>Mn(2+)</name>
        <dbReference type="ChEBI" id="CHEBI:29035"/>
    </cofactor>
    <text evidence="1">Binds 2 magnesium or manganese ions per subunit.</text>
</comment>
<comment type="pathway">
    <text evidence="2">Cell wall biogenesis; peptidoglycan biosynthesis.</text>
</comment>
<comment type="subcellular location">
    <subcellularLocation>
        <location evidence="2">Cytoplasm</location>
    </subcellularLocation>
</comment>
<comment type="similarity">
    <text evidence="2">Belongs to the D-alanine--D-alanine ligase family.</text>
</comment>
<keyword id="KW-0067">ATP-binding</keyword>
<keyword id="KW-0133">Cell shape</keyword>
<keyword id="KW-0961">Cell wall biogenesis/degradation</keyword>
<keyword id="KW-0963">Cytoplasm</keyword>
<keyword id="KW-0436">Ligase</keyword>
<keyword id="KW-0460">Magnesium</keyword>
<keyword id="KW-0464">Manganese</keyword>
<keyword id="KW-0479">Metal-binding</keyword>
<keyword id="KW-0547">Nucleotide-binding</keyword>
<keyword id="KW-0573">Peptidoglycan synthesis</keyword>
<keyword id="KW-1185">Reference proteome</keyword>
<reference key="1">
    <citation type="journal article" date="2002" name="Proc. Natl. Acad. Sci. U.S.A.">
        <title>The genome sequence of Bifidobacterium longum reflects its adaptation to the human gastrointestinal tract.</title>
        <authorList>
            <person name="Schell M.A."/>
            <person name="Karmirantzou M."/>
            <person name="Snel B."/>
            <person name="Vilanova D."/>
            <person name="Berger B."/>
            <person name="Pessi G."/>
            <person name="Zwahlen M.-C."/>
            <person name="Desiere F."/>
            <person name="Bork P."/>
            <person name="Delley M."/>
            <person name="Pridmore R.D."/>
            <person name="Arigoni F."/>
        </authorList>
    </citation>
    <scope>NUCLEOTIDE SEQUENCE [LARGE SCALE GENOMIC DNA]</scope>
    <source>
        <strain>NCC 2705</strain>
    </source>
</reference>
<sequence>MRLLCAAFRARFGPVGGAKHRLENGCSFNKRMVMAKKRVVVLYGGRADEHSISCISTAGVLGAMDTERFEPIPVGITKDGKWIINGEDPRGWNLDGGELPTVKITPESRPVMLDPSRGQDGFFIGEPSHINSADSGFGTSFVSMSDPEMHHVLTSLGHVDAVLPVLHGPYGEDGTVQGLLEMMGVPYVGCGVFASAACMDKHYTKVVLDAAGIPTAPGVTVDARNFTAADVLAEIEDAGLTYPLFVKPSRAGSSFGVTKVEKADDRETQQDRLAAAIATAGEHDWKVLVEQGIDGREIECAVLCPKAGDEPEASWPGEIVLDHQNDDQFYDFDSKYMDASASHVEVPANLPVSVLEDVRDVARRAFKAVDGAGLSRVDTFVTPDGTVMVNEINTMPGFTPISMYPKAWDATGVSYTELITRLIEGVLR</sequence>
<accession>Q8G7C4</accession>
<feature type="chain" id="PRO_0000177787" description="D-alanine--D-alanine ligase">
    <location>
        <begin position="1"/>
        <end position="428"/>
    </location>
</feature>
<feature type="domain" description="ATP-grasp" evidence="2">
    <location>
        <begin position="205"/>
        <end position="424"/>
    </location>
</feature>
<feature type="binding site" evidence="2">
    <location>
        <begin position="237"/>
        <end position="299"/>
    </location>
    <ligand>
        <name>ATP</name>
        <dbReference type="ChEBI" id="CHEBI:30616"/>
    </ligand>
</feature>
<feature type="binding site" evidence="2">
    <location>
        <position position="378"/>
    </location>
    <ligand>
        <name>Mg(2+)</name>
        <dbReference type="ChEBI" id="CHEBI:18420"/>
        <label>1</label>
    </ligand>
</feature>
<feature type="binding site" evidence="2">
    <location>
        <position position="391"/>
    </location>
    <ligand>
        <name>Mg(2+)</name>
        <dbReference type="ChEBI" id="CHEBI:18420"/>
        <label>1</label>
    </ligand>
</feature>
<feature type="binding site" evidence="2">
    <location>
        <position position="391"/>
    </location>
    <ligand>
        <name>Mg(2+)</name>
        <dbReference type="ChEBI" id="CHEBI:18420"/>
        <label>2</label>
    </ligand>
</feature>
<feature type="binding site" evidence="2">
    <location>
        <position position="393"/>
    </location>
    <ligand>
        <name>Mg(2+)</name>
        <dbReference type="ChEBI" id="CHEBI:18420"/>
        <label>2</label>
    </ligand>
</feature>
<name>DDL_BIFLO</name>
<gene>
    <name evidence="2" type="primary">ddl</name>
    <name type="synonym">ddlA</name>
    <name type="ordered locus">BL0345</name>
</gene>
<protein>
    <recommendedName>
        <fullName evidence="2">D-alanine--D-alanine ligase</fullName>
        <ecNumber evidence="2">6.3.2.4</ecNumber>
    </recommendedName>
    <alternativeName>
        <fullName evidence="2">D-Ala-D-Ala ligase</fullName>
    </alternativeName>
    <alternativeName>
        <fullName evidence="2">D-alanylalanine synthetase</fullName>
    </alternativeName>
</protein>
<dbReference type="EC" id="6.3.2.4" evidence="2"/>
<dbReference type="EMBL" id="AE014295">
    <property type="protein sequence ID" value="AAN24184.1"/>
    <property type="molecule type" value="Genomic_DNA"/>
</dbReference>
<dbReference type="RefSeq" id="NP_695548.1">
    <property type="nucleotide sequence ID" value="NC_004307.2"/>
</dbReference>
<dbReference type="SMR" id="Q8G7C4"/>
<dbReference type="STRING" id="206672.BL0345"/>
<dbReference type="EnsemblBacteria" id="AAN24184">
    <property type="protein sequence ID" value="AAN24184"/>
    <property type="gene ID" value="BL0345"/>
</dbReference>
<dbReference type="KEGG" id="blo:BL0345"/>
<dbReference type="PATRIC" id="fig|206672.9.peg.1082"/>
<dbReference type="HOGENOM" id="CLU_039268_0_0_11"/>
<dbReference type="OrthoDB" id="9813261at2"/>
<dbReference type="PhylomeDB" id="Q8G7C4"/>
<dbReference type="UniPathway" id="UPA00219"/>
<dbReference type="Proteomes" id="UP000000439">
    <property type="component" value="Chromosome"/>
</dbReference>
<dbReference type="GO" id="GO:0005829">
    <property type="term" value="C:cytosol"/>
    <property type="evidence" value="ECO:0007669"/>
    <property type="project" value="TreeGrafter"/>
</dbReference>
<dbReference type="GO" id="GO:0005524">
    <property type="term" value="F:ATP binding"/>
    <property type="evidence" value="ECO:0007669"/>
    <property type="project" value="UniProtKB-KW"/>
</dbReference>
<dbReference type="GO" id="GO:0008716">
    <property type="term" value="F:D-alanine-D-alanine ligase activity"/>
    <property type="evidence" value="ECO:0007669"/>
    <property type="project" value="UniProtKB-UniRule"/>
</dbReference>
<dbReference type="GO" id="GO:0046872">
    <property type="term" value="F:metal ion binding"/>
    <property type="evidence" value="ECO:0007669"/>
    <property type="project" value="UniProtKB-KW"/>
</dbReference>
<dbReference type="GO" id="GO:0071555">
    <property type="term" value="P:cell wall organization"/>
    <property type="evidence" value="ECO:0007669"/>
    <property type="project" value="UniProtKB-KW"/>
</dbReference>
<dbReference type="GO" id="GO:0009252">
    <property type="term" value="P:peptidoglycan biosynthetic process"/>
    <property type="evidence" value="ECO:0007669"/>
    <property type="project" value="UniProtKB-UniRule"/>
</dbReference>
<dbReference type="GO" id="GO:0008360">
    <property type="term" value="P:regulation of cell shape"/>
    <property type="evidence" value="ECO:0007669"/>
    <property type="project" value="UniProtKB-KW"/>
</dbReference>
<dbReference type="FunFam" id="3.30.470.20:FF:000008">
    <property type="entry name" value="D-alanine--D-alanine ligase"/>
    <property type="match status" value="1"/>
</dbReference>
<dbReference type="Gene3D" id="3.40.50.20">
    <property type="match status" value="1"/>
</dbReference>
<dbReference type="Gene3D" id="3.30.1490.20">
    <property type="entry name" value="ATP-grasp fold, A domain"/>
    <property type="match status" value="1"/>
</dbReference>
<dbReference type="Gene3D" id="3.30.470.20">
    <property type="entry name" value="ATP-grasp fold, B domain"/>
    <property type="match status" value="1"/>
</dbReference>
<dbReference type="HAMAP" id="MF_00047">
    <property type="entry name" value="Dala_Dala_lig"/>
    <property type="match status" value="1"/>
</dbReference>
<dbReference type="InterPro" id="IPR011761">
    <property type="entry name" value="ATP-grasp"/>
</dbReference>
<dbReference type="InterPro" id="IPR013815">
    <property type="entry name" value="ATP_grasp_subdomain_1"/>
</dbReference>
<dbReference type="InterPro" id="IPR000291">
    <property type="entry name" value="D-Ala_lig_Van_CS"/>
</dbReference>
<dbReference type="InterPro" id="IPR005905">
    <property type="entry name" value="D_ala_D_ala"/>
</dbReference>
<dbReference type="InterPro" id="IPR011095">
    <property type="entry name" value="Dala_Dala_lig_C"/>
</dbReference>
<dbReference type="InterPro" id="IPR011127">
    <property type="entry name" value="Dala_Dala_lig_N"/>
</dbReference>
<dbReference type="InterPro" id="IPR016185">
    <property type="entry name" value="PreATP-grasp_dom_sf"/>
</dbReference>
<dbReference type="NCBIfam" id="TIGR01205">
    <property type="entry name" value="D_ala_D_alaTIGR"/>
    <property type="match status" value="1"/>
</dbReference>
<dbReference type="NCBIfam" id="NF002528">
    <property type="entry name" value="PRK01966.1-4"/>
    <property type="match status" value="1"/>
</dbReference>
<dbReference type="PANTHER" id="PTHR23132">
    <property type="entry name" value="D-ALANINE--D-ALANINE LIGASE"/>
    <property type="match status" value="1"/>
</dbReference>
<dbReference type="PANTHER" id="PTHR23132:SF25">
    <property type="entry name" value="D-ALANINE--D-ALANINE LIGASE A"/>
    <property type="match status" value="1"/>
</dbReference>
<dbReference type="Pfam" id="PF07478">
    <property type="entry name" value="Dala_Dala_lig_C"/>
    <property type="match status" value="1"/>
</dbReference>
<dbReference type="Pfam" id="PF01820">
    <property type="entry name" value="Dala_Dala_lig_N"/>
    <property type="match status" value="1"/>
</dbReference>
<dbReference type="PIRSF" id="PIRSF039102">
    <property type="entry name" value="Ddl/VanB"/>
    <property type="match status" value="1"/>
</dbReference>
<dbReference type="SUPFAM" id="SSF56059">
    <property type="entry name" value="Glutathione synthetase ATP-binding domain-like"/>
    <property type="match status" value="1"/>
</dbReference>
<dbReference type="SUPFAM" id="SSF52440">
    <property type="entry name" value="PreATP-grasp domain"/>
    <property type="match status" value="1"/>
</dbReference>
<dbReference type="PROSITE" id="PS50975">
    <property type="entry name" value="ATP_GRASP"/>
    <property type="match status" value="1"/>
</dbReference>
<dbReference type="PROSITE" id="PS00843">
    <property type="entry name" value="DALA_DALA_LIGASE_1"/>
    <property type="match status" value="1"/>
</dbReference>
<dbReference type="PROSITE" id="PS00844">
    <property type="entry name" value="DALA_DALA_LIGASE_2"/>
    <property type="match status" value="1"/>
</dbReference>
<organism>
    <name type="scientific">Bifidobacterium longum (strain NCC 2705)</name>
    <dbReference type="NCBI Taxonomy" id="206672"/>
    <lineage>
        <taxon>Bacteria</taxon>
        <taxon>Bacillati</taxon>
        <taxon>Actinomycetota</taxon>
        <taxon>Actinomycetes</taxon>
        <taxon>Bifidobacteriales</taxon>
        <taxon>Bifidobacteriaceae</taxon>
        <taxon>Bifidobacterium</taxon>
    </lineage>
</organism>
<evidence type="ECO:0000250" key="1"/>
<evidence type="ECO:0000255" key="2">
    <source>
        <dbReference type="HAMAP-Rule" id="MF_00047"/>
    </source>
</evidence>
<proteinExistence type="inferred from homology"/>